<feature type="initiator methionine" description="Removed" evidence="2">
    <location>
        <position position="1"/>
    </location>
</feature>
<feature type="chain" id="PRO_0000290333" description="Protein transport protein Sec23B">
    <location>
        <begin position="2"/>
        <end position="766"/>
    </location>
</feature>
<feature type="repeat" description="Gelsolin-like" evidence="4">
    <location>
        <begin position="633"/>
        <end position="719"/>
    </location>
</feature>
<feature type="binding site" evidence="1">
    <location>
        <position position="61"/>
    </location>
    <ligand>
        <name>Zn(2+)</name>
        <dbReference type="ChEBI" id="CHEBI:29105"/>
    </ligand>
</feature>
<feature type="binding site" evidence="1">
    <location>
        <position position="66"/>
    </location>
    <ligand>
        <name>Zn(2+)</name>
        <dbReference type="ChEBI" id="CHEBI:29105"/>
    </ligand>
</feature>
<feature type="binding site" evidence="1">
    <location>
        <position position="85"/>
    </location>
    <ligand>
        <name>Zn(2+)</name>
        <dbReference type="ChEBI" id="CHEBI:29105"/>
    </ligand>
</feature>
<feature type="binding site" evidence="1">
    <location>
        <position position="88"/>
    </location>
    <ligand>
        <name>Zn(2+)</name>
        <dbReference type="ChEBI" id="CHEBI:29105"/>
    </ligand>
</feature>
<feature type="modified residue" description="N-acetylalanine" evidence="2">
    <location>
        <position position="2"/>
    </location>
</feature>
<feature type="modified residue" description="N6-acetyllysine" evidence="3">
    <location>
        <position position="564"/>
    </location>
</feature>
<accession>Q5R5G2</accession>
<gene>
    <name evidence="2" type="primary">SEC23B</name>
</gene>
<reference key="1">
    <citation type="submission" date="2004-11" db="EMBL/GenBank/DDBJ databases">
        <authorList>
            <consortium name="The German cDNA consortium"/>
        </authorList>
    </citation>
    <scope>NUCLEOTIDE SEQUENCE [LARGE SCALE MRNA]</scope>
    <source>
        <tissue>Kidney</tissue>
    </source>
</reference>
<organism>
    <name type="scientific">Pongo abelii</name>
    <name type="common">Sumatran orangutan</name>
    <name type="synonym">Pongo pygmaeus abelii</name>
    <dbReference type="NCBI Taxonomy" id="9601"/>
    <lineage>
        <taxon>Eukaryota</taxon>
        <taxon>Metazoa</taxon>
        <taxon>Chordata</taxon>
        <taxon>Craniata</taxon>
        <taxon>Vertebrata</taxon>
        <taxon>Euteleostomi</taxon>
        <taxon>Mammalia</taxon>
        <taxon>Eutheria</taxon>
        <taxon>Euarchontoglires</taxon>
        <taxon>Primates</taxon>
        <taxon>Haplorrhini</taxon>
        <taxon>Catarrhini</taxon>
        <taxon>Hominidae</taxon>
        <taxon>Pongo</taxon>
    </lineage>
</organism>
<name>SC23B_PONAB</name>
<keyword id="KW-0007">Acetylation</keyword>
<keyword id="KW-0963">Cytoplasm</keyword>
<keyword id="KW-0968">Cytoplasmic vesicle</keyword>
<keyword id="KW-0256">Endoplasmic reticulum</keyword>
<keyword id="KW-0931">ER-Golgi transport</keyword>
<keyword id="KW-0472">Membrane</keyword>
<keyword id="KW-0479">Metal-binding</keyword>
<keyword id="KW-0653">Protein transport</keyword>
<keyword id="KW-1185">Reference proteome</keyword>
<keyword id="KW-0813">Transport</keyword>
<keyword id="KW-0862">Zinc</keyword>
<protein>
    <recommendedName>
        <fullName evidence="5">Protein transport protein Sec23B</fullName>
    </recommendedName>
    <alternativeName>
        <fullName>SEC23-related protein B</fullName>
    </alternativeName>
</protein>
<evidence type="ECO:0000250" key="1">
    <source>
        <dbReference type="UniProtKB" id="Q15436"/>
    </source>
</evidence>
<evidence type="ECO:0000250" key="2">
    <source>
        <dbReference type="UniProtKB" id="Q15437"/>
    </source>
</evidence>
<evidence type="ECO:0000250" key="3">
    <source>
        <dbReference type="UniProtKB" id="Q9D662"/>
    </source>
</evidence>
<evidence type="ECO:0000255" key="4"/>
<evidence type="ECO:0000305" key="5"/>
<comment type="function">
    <text evidence="1">Component of the coat protein complex II (COPII) which promotes the formation of transport vesicles from the endoplasmic reticulum (ER). The coat has two main functions, the physical deformation of the endoplasmic reticulum membrane into vesicles and the selection of cargo molecules for their transport to the Golgi complex.</text>
</comment>
<comment type="subunit">
    <text evidence="1 2">COPII is composed of at least five proteins: the Sec23/24 complex, the Sec13/31 complex and Sar1 (By similarity). Interacts with SAR1A (By similarity).</text>
</comment>
<comment type="subcellular location">
    <subcellularLocation>
        <location evidence="1">Cytoplasmic vesicle</location>
        <location evidence="1">COPII-coated vesicle membrane</location>
        <topology evidence="1">Peripheral membrane protein</topology>
        <orientation evidence="1">Cytoplasmic side</orientation>
    </subcellularLocation>
    <subcellularLocation>
        <location evidence="2">Endoplasmic reticulum membrane</location>
        <topology evidence="1">Peripheral membrane protein</topology>
        <orientation evidence="1">Cytoplasmic side</orientation>
    </subcellularLocation>
    <subcellularLocation>
        <location evidence="1">Cytoplasm</location>
        <location evidence="1">Cytosol</location>
    </subcellularLocation>
</comment>
<comment type="similarity">
    <text evidence="5">Belongs to the SEC23/SEC24 family. SEC23 subfamily.</text>
</comment>
<proteinExistence type="evidence at transcript level"/>
<sequence>MATYLEFIQQNEERDGVRFSWNVWPSSRLEATRMVVPLACLLTPLKERPDLPPVQYEPVLCSRPTCKAVLNPLCQVDYRAKLWACNFCFQRNQFPPAYGGISEVNQPAELMPQFSTIEYVIQRGAQSPLIFLYVVDTCLEEDDLQALKESLQMSLSLLPPDALVGLITFGRMVQVHELSCEGISKSYVFRGTKDLTAKQIQDMLGLTKPAMPMQQARPAQPQEHPFASSRFLQPVHKIDMNLTDLLGELQRDPWPVTQGKRPLRSTGVALSIAVGLLEGTFPNTGARIMLFTGGPPTQGPGMVVGDELKIPIRSWHDIEKDNARFMKKATKHYEMLANRTAANGHCIDIYACALDQTGLLEMKCCANLTGGYMVMGDSFNTSLFKQTFQRIFTKDFNGDFRMAFGATLDVKTSRELKIAGAIGPCVSLNVKGPCVSENELGVGGTSQWKICGLDPTSTLGIYFEVVNQHNTPIPQGGRGAIQFVTHYQHSSTQRRIRVTTIARNWADVQSQLRHIEAAFDQEAAAVLMARLGVFRAESEEGPDVLRWLDRQLIRLCQKFGQYNKEDPTSFRLSDSFSLYPQFMFHLRRSPFLQVFNNSPDSSYYRHHFARQDLTQSLIMIQPILYSYSFHGPPEPVLLDSSSILADRILLMDTFFQIVIYLGETIAQWRKAGYQDMPEYENFKHLLQAPLDDAQEILQARFPMPRYINTEHGGSQARFLLSKVNPSQTHNNLYAWGQETGAPILTDDVSLQVFMDHLKKLAVSSAC</sequence>
<dbReference type="EMBL" id="CR860898">
    <property type="protein sequence ID" value="CAH93004.1"/>
    <property type="molecule type" value="mRNA"/>
</dbReference>
<dbReference type="RefSeq" id="NP_001126773.1">
    <property type="nucleotide sequence ID" value="NM_001133301.1"/>
</dbReference>
<dbReference type="SMR" id="Q5R5G2"/>
<dbReference type="STRING" id="9601.ENSPPYP00000012004"/>
<dbReference type="GeneID" id="100173777"/>
<dbReference type="KEGG" id="pon:100173777"/>
<dbReference type="CTD" id="10483"/>
<dbReference type="eggNOG" id="KOG1986">
    <property type="taxonomic scope" value="Eukaryota"/>
</dbReference>
<dbReference type="HOGENOM" id="CLU_008658_3_0_1"/>
<dbReference type="InParanoid" id="Q5R5G2"/>
<dbReference type="OrthoDB" id="10256289at2759"/>
<dbReference type="Proteomes" id="UP000001595">
    <property type="component" value="Unplaced"/>
</dbReference>
<dbReference type="GO" id="GO:0030127">
    <property type="term" value="C:COPII vesicle coat"/>
    <property type="evidence" value="ECO:0007669"/>
    <property type="project" value="InterPro"/>
</dbReference>
<dbReference type="GO" id="GO:0005829">
    <property type="term" value="C:cytosol"/>
    <property type="evidence" value="ECO:0007669"/>
    <property type="project" value="UniProtKB-SubCell"/>
</dbReference>
<dbReference type="GO" id="GO:0005783">
    <property type="term" value="C:endoplasmic reticulum"/>
    <property type="evidence" value="ECO:0000250"/>
    <property type="project" value="UniProtKB"/>
</dbReference>
<dbReference type="GO" id="GO:0070971">
    <property type="term" value="C:endoplasmic reticulum exit site"/>
    <property type="evidence" value="ECO:0007669"/>
    <property type="project" value="TreeGrafter"/>
</dbReference>
<dbReference type="GO" id="GO:0005789">
    <property type="term" value="C:endoplasmic reticulum membrane"/>
    <property type="evidence" value="ECO:0007669"/>
    <property type="project" value="UniProtKB-SubCell"/>
</dbReference>
<dbReference type="GO" id="GO:0005096">
    <property type="term" value="F:GTPase activator activity"/>
    <property type="evidence" value="ECO:0007669"/>
    <property type="project" value="TreeGrafter"/>
</dbReference>
<dbReference type="GO" id="GO:0008270">
    <property type="term" value="F:zinc ion binding"/>
    <property type="evidence" value="ECO:0007669"/>
    <property type="project" value="InterPro"/>
</dbReference>
<dbReference type="GO" id="GO:0090110">
    <property type="term" value="P:COPII-coated vesicle cargo loading"/>
    <property type="evidence" value="ECO:0007669"/>
    <property type="project" value="TreeGrafter"/>
</dbReference>
<dbReference type="GO" id="GO:0006886">
    <property type="term" value="P:intracellular protein transport"/>
    <property type="evidence" value="ECO:0007669"/>
    <property type="project" value="InterPro"/>
</dbReference>
<dbReference type="CDD" id="cd01478">
    <property type="entry name" value="Sec23-like"/>
    <property type="match status" value="1"/>
</dbReference>
<dbReference type="CDD" id="cd11287">
    <property type="entry name" value="Sec23_C"/>
    <property type="match status" value="1"/>
</dbReference>
<dbReference type="FunFam" id="1.20.120.730:FF:000005">
    <property type="entry name" value="Protein transport protein SEC23"/>
    <property type="match status" value="1"/>
</dbReference>
<dbReference type="FunFam" id="2.30.30.380:FF:000001">
    <property type="entry name" value="Protein transport protein SEC23"/>
    <property type="match status" value="1"/>
</dbReference>
<dbReference type="FunFam" id="2.60.40.1670:FF:000006">
    <property type="entry name" value="Protein transport protein SEC23"/>
    <property type="match status" value="1"/>
</dbReference>
<dbReference type="FunFam" id="3.40.20.10:FF:000003">
    <property type="entry name" value="Protein transport protein SEC23"/>
    <property type="match status" value="1"/>
</dbReference>
<dbReference type="FunFam" id="3.40.50.410:FF:000011">
    <property type="entry name" value="Protein transport protein SEC23"/>
    <property type="match status" value="1"/>
</dbReference>
<dbReference type="Gene3D" id="2.60.40.1670">
    <property type="entry name" value="beta-sandwich domain of Sec23/24"/>
    <property type="match status" value="1"/>
</dbReference>
<dbReference type="Gene3D" id="1.20.120.730">
    <property type="entry name" value="Sec23/Sec24 helical domain"/>
    <property type="match status" value="1"/>
</dbReference>
<dbReference type="Gene3D" id="3.40.20.10">
    <property type="entry name" value="Severin"/>
    <property type="match status" value="1"/>
</dbReference>
<dbReference type="Gene3D" id="3.40.50.410">
    <property type="entry name" value="von Willebrand factor, type A domain"/>
    <property type="match status" value="1"/>
</dbReference>
<dbReference type="Gene3D" id="2.30.30.380">
    <property type="entry name" value="Zn-finger domain of Sec23/24"/>
    <property type="match status" value="1"/>
</dbReference>
<dbReference type="InterPro" id="IPR029006">
    <property type="entry name" value="ADF-H/Gelsolin-like_dom_sf"/>
</dbReference>
<dbReference type="InterPro" id="IPR007123">
    <property type="entry name" value="Gelsolin-like_dom"/>
</dbReference>
<dbReference type="InterPro" id="IPR036180">
    <property type="entry name" value="Gelsolin-like_dom_sf"/>
</dbReference>
<dbReference type="InterPro" id="IPR037364">
    <property type="entry name" value="Sec23"/>
</dbReference>
<dbReference type="InterPro" id="IPR006900">
    <property type="entry name" value="Sec23/24_helical_dom"/>
</dbReference>
<dbReference type="InterPro" id="IPR036175">
    <property type="entry name" value="Sec23/24_helical_dom_sf"/>
</dbReference>
<dbReference type="InterPro" id="IPR006896">
    <property type="entry name" value="Sec23/24_trunk_dom"/>
</dbReference>
<dbReference type="InterPro" id="IPR012990">
    <property type="entry name" value="Sec23_24_beta_S"/>
</dbReference>
<dbReference type="InterPro" id="IPR037550">
    <property type="entry name" value="Sec23_C"/>
</dbReference>
<dbReference type="InterPro" id="IPR036465">
    <property type="entry name" value="vWFA_dom_sf"/>
</dbReference>
<dbReference type="InterPro" id="IPR006895">
    <property type="entry name" value="Znf_Sec23_Sec24"/>
</dbReference>
<dbReference type="InterPro" id="IPR036174">
    <property type="entry name" value="Znf_Sec23_Sec24_sf"/>
</dbReference>
<dbReference type="PANTHER" id="PTHR11141">
    <property type="entry name" value="PROTEIN TRANSPORT PROTEIN SEC23"/>
    <property type="match status" value="1"/>
</dbReference>
<dbReference type="PANTHER" id="PTHR11141:SF10">
    <property type="entry name" value="PROTEIN TRANSPORT PROTEIN SEC23B"/>
    <property type="match status" value="1"/>
</dbReference>
<dbReference type="Pfam" id="PF00626">
    <property type="entry name" value="Gelsolin"/>
    <property type="match status" value="1"/>
</dbReference>
<dbReference type="Pfam" id="PF08033">
    <property type="entry name" value="Sec23_BS"/>
    <property type="match status" value="1"/>
</dbReference>
<dbReference type="Pfam" id="PF04815">
    <property type="entry name" value="Sec23_helical"/>
    <property type="match status" value="1"/>
</dbReference>
<dbReference type="Pfam" id="PF04811">
    <property type="entry name" value="Sec23_trunk"/>
    <property type="match status" value="1"/>
</dbReference>
<dbReference type="Pfam" id="PF04810">
    <property type="entry name" value="zf-Sec23_Sec24"/>
    <property type="match status" value="1"/>
</dbReference>
<dbReference type="SUPFAM" id="SSF81995">
    <property type="entry name" value="beta-sandwich domain of Sec23/24"/>
    <property type="match status" value="1"/>
</dbReference>
<dbReference type="SUPFAM" id="SSF82754">
    <property type="entry name" value="C-terminal, gelsolin-like domain of Sec23/24"/>
    <property type="match status" value="1"/>
</dbReference>
<dbReference type="SUPFAM" id="SSF81811">
    <property type="entry name" value="Helical domain of Sec23/24"/>
    <property type="match status" value="1"/>
</dbReference>
<dbReference type="SUPFAM" id="SSF53300">
    <property type="entry name" value="vWA-like"/>
    <property type="match status" value="1"/>
</dbReference>
<dbReference type="SUPFAM" id="SSF82919">
    <property type="entry name" value="Zn-finger domain of Sec23/24"/>
    <property type="match status" value="1"/>
</dbReference>